<comment type="function">
    <text evidence="3">Has antibacterial activity.</text>
</comment>
<comment type="subcellular location">
    <subcellularLocation>
        <location evidence="3">Secreted</location>
    </subcellularLocation>
</comment>
<comment type="similarity">
    <text evidence="3">Belongs to the beta-defensin family.</text>
</comment>
<gene>
    <name type="primary">DEFB135</name>
</gene>
<organism>
    <name type="scientific">Pan troglodytes</name>
    <name type="common">Chimpanzee</name>
    <dbReference type="NCBI Taxonomy" id="9598"/>
    <lineage>
        <taxon>Eukaryota</taxon>
        <taxon>Metazoa</taxon>
        <taxon>Chordata</taxon>
        <taxon>Craniata</taxon>
        <taxon>Vertebrata</taxon>
        <taxon>Euteleostomi</taxon>
        <taxon>Mammalia</taxon>
        <taxon>Eutheria</taxon>
        <taxon>Euarchontoglires</taxon>
        <taxon>Primates</taxon>
        <taxon>Haplorrhini</taxon>
        <taxon>Catarrhini</taxon>
        <taxon>Hominidae</taxon>
        <taxon>Pan</taxon>
    </lineage>
</organism>
<keyword id="KW-0044">Antibiotic</keyword>
<keyword id="KW-0929">Antimicrobial</keyword>
<keyword id="KW-0211">Defensin</keyword>
<keyword id="KW-1015">Disulfide bond</keyword>
<keyword id="KW-1185">Reference proteome</keyword>
<keyword id="KW-0964">Secreted</keyword>
<keyword id="KW-0732">Signal</keyword>
<sequence>MATRSVLLALVVLNLLFYVPPGRSGPNVYIQKIFASCWRLQGTCRPKCLKNETISYFGVILYICGCVNPKYLPILTGK</sequence>
<feature type="signal peptide" evidence="2">
    <location>
        <begin position="1"/>
        <end position="24"/>
    </location>
</feature>
<feature type="chain" id="PRO_0000045363" description="Beta-defensin 135">
    <location>
        <begin position="25"/>
        <end position="78"/>
    </location>
</feature>
<feature type="disulfide bond" evidence="1">
    <location>
        <begin position="37"/>
        <end position="64"/>
    </location>
</feature>
<feature type="disulfide bond" evidence="1">
    <location>
        <begin position="48"/>
        <end position="66"/>
    </location>
</feature>
<reference key="1">
    <citation type="journal article" date="2005" name="Physiol. Genomics">
        <title>Cross-species analysis of the mammalian beta-defensin gene family: presence of syntenic gene clusters and preferential expression in the male reproductive tract.</title>
        <authorList>
            <person name="Patil A.A."/>
            <person name="Cai Y."/>
            <person name="Sang Y."/>
            <person name="Blecha F."/>
            <person name="Zhang G."/>
        </authorList>
    </citation>
    <scope>NUCLEOTIDE SEQUENCE [MRNA]</scope>
</reference>
<dbReference type="EMBL" id="DQ012086">
    <property type="protein sequence ID" value="AAY59816.1"/>
    <property type="molecule type" value="mRNA"/>
</dbReference>
<dbReference type="RefSeq" id="NP_001123263.1">
    <property type="nucleotide sequence ID" value="NM_001129791.1"/>
</dbReference>
<dbReference type="SMR" id="Q30KJ4"/>
<dbReference type="STRING" id="9598.ENSPTRP00000053237"/>
<dbReference type="GeneID" id="738168"/>
<dbReference type="KEGG" id="ptr:738168"/>
<dbReference type="CTD" id="613209"/>
<dbReference type="InParanoid" id="Q30KJ4"/>
<dbReference type="OrthoDB" id="11332at9604"/>
<dbReference type="Proteomes" id="UP000002277">
    <property type="component" value="Unplaced"/>
</dbReference>
<dbReference type="GO" id="GO:0005576">
    <property type="term" value="C:extracellular region"/>
    <property type="evidence" value="ECO:0007669"/>
    <property type="project" value="UniProtKB-SubCell"/>
</dbReference>
<dbReference type="GO" id="GO:0050829">
    <property type="term" value="P:defense response to Gram-negative bacterium"/>
    <property type="evidence" value="ECO:0007669"/>
    <property type="project" value="UniProtKB-ARBA"/>
</dbReference>
<dbReference type="GO" id="GO:0045087">
    <property type="term" value="P:innate immune response"/>
    <property type="evidence" value="ECO:0007669"/>
    <property type="project" value="InterPro"/>
</dbReference>
<dbReference type="InterPro" id="IPR050544">
    <property type="entry name" value="Beta-defensin"/>
</dbReference>
<dbReference type="InterPro" id="IPR025933">
    <property type="entry name" value="Beta_defensin_dom"/>
</dbReference>
<dbReference type="PANTHER" id="PTHR15001">
    <property type="entry name" value="BETA-DEFENSIN 123-RELATED"/>
    <property type="match status" value="1"/>
</dbReference>
<dbReference type="PANTHER" id="PTHR15001:SF10">
    <property type="entry name" value="BETA-DEFENSIN 135"/>
    <property type="match status" value="1"/>
</dbReference>
<dbReference type="Pfam" id="PF13841">
    <property type="entry name" value="Defensin_beta_2"/>
    <property type="match status" value="1"/>
</dbReference>
<evidence type="ECO:0000250" key="1"/>
<evidence type="ECO:0000255" key="2"/>
<evidence type="ECO:0000305" key="3"/>
<proteinExistence type="inferred from homology"/>
<protein>
    <recommendedName>
        <fullName>Beta-defensin 135</fullName>
    </recommendedName>
    <alternativeName>
        <fullName>Defensin, beta 135</fullName>
    </alternativeName>
</protein>
<name>DB135_PANTR</name>
<accession>Q30KJ4</accession>